<organism>
    <name type="scientific">Staphylococcus aureus (strain MSSA476)</name>
    <dbReference type="NCBI Taxonomy" id="282459"/>
    <lineage>
        <taxon>Bacteria</taxon>
        <taxon>Bacillati</taxon>
        <taxon>Bacillota</taxon>
        <taxon>Bacilli</taxon>
        <taxon>Bacillales</taxon>
        <taxon>Staphylococcaceae</taxon>
        <taxon>Staphylococcus</taxon>
    </lineage>
</organism>
<dbReference type="EC" id="2.1.1.177" evidence="1"/>
<dbReference type="EMBL" id="BX571857">
    <property type="protein sequence ID" value="CAG41796.1"/>
    <property type="molecule type" value="Genomic_DNA"/>
</dbReference>
<dbReference type="RefSeq" id="WP_000704777.1">
    <property type="nucleotide sequence ID" value="NC_002953.3"/>
</dbReference>
<dbReference type="SMR" id="Q6GD66"/>
<dbReference type="KEGG" id="sas:SAS0024"/>
<dbReference type="HOGENOM" id="CLU_100552_0_0_9"/>
<dbReference type="GO" id="GO:0005737">
    <property type="term" value="C:cytoplasm"/>
    <property type="evidence" value="ECO:0007669"/>
    <property type="project" value="UniProtKB-SubCell"/>
</dbReference>
<dbReference type="GO" id="GO:0070038">
    <property type="term" value="F:rRNA (pseudouridine-N3-)-methyltransferase activity"/>
    <property type="evidence" value="ECO:0007669"/>
    <property type="project" value="UniProtKB-UniRule"/>
</dbReference>
<dbReference type="CDD" id="cd18081">
    <property type="entry name" value="RlmH-like"/>
    <property type="match status" value="1"/>
</dbReference>
<dbReference type="Gene3D" id="3.40.1280.10">
    <property type="match status" value="1"/>
</dbReference>
<dbReference type="HAMAP" id="MF_00658">
    <property type="entry name" value="23SrRNA_methyltr_H"/>
    <property type="match status" value="1"/>
</dbReference>
<dbReference type="InterPro" id="IPR029028">
    <property type="entry name" value="Alpha/beta_knot_MTases"/>
</dbReference>
<dbReference type="InterPro" id="IPR003742">
    <property type="entry name" value="RlmH-like"/>
</dbReference>
<dbReference type="InterPro" id="IPR029026">
    <property type="entry name" value="tRNA_m1G_MTases_N"/>
</dbReference>
<dbReference type="NCBIfam" id="NF000985">
    <property type="entry name" value="PRK00103.1-3"/>
    <property type="match status" value="1"/>
</dbReference>
<dbReference type="NCBIfam" id="NF000986">
    <property type="entry name" value="PRK00103.1-4"/>
    <property type="match status" value="1"/>
</dbReference>
<dbReference type="NCBIfam" id="TIGR00246">
    <property type="entry name" value="tRNA_RlmH_YbeA"/>
    <property type="match status" value="1"/>
</dbReference>
<dbReference type="PANTHER" id="PTHR33603">
    <property type="entry name" value="METHYLTRANSFERASE"/>
    <property type="match status" value="1"/>
</dbReference>
<dbReference type="PANTHER" id="PTHR33603:SF1">
    <property type="entry name" value="RIBOSOMAL RNA LARGE SUBUNIT METHYLTRANSFERASE H"/>
    <property type="match status" value="1"/>
</dbReference>
<dbReference type="Pfam" id="PF02590">
    <property type="entry name" value="SPOUT_MTase"/>
    <property type="match status" value="1"/>
</dbReference>
<dbReference type="PIRSF" id="PIRSF004505">
    <property type="entry name" value="MT_bac"/>
    <property type="match status" value="1"/>
</dbReference>
<dbReference type="SUPFAM" id="SSF75217">
    <property type="entry name" value="alpha/beta knot"/>
    <property type="match status" value="1"/>
</dbReference>
<evidence type="ECO:0000255" key="1">
    <source>
        <dbReference type="HAMAP-Rule" id="MF_00658"/>
    </source>
</evidence>
<comment type="function">
    <text evidence="1">Specifically methylates the pseudouridine at position 1915 (m3Psi1915) in 23S rRNA.</text>
</comment>
<comment type="catalytic activity">
    <reaction evidence="1">
        <text>pseudouridine(1915) in 23S rRNA + S-adenosyl-L-methionine = N(3)-methylpseudouridine(1915) in 23S rRNA + S-adenosyl-L-homocysteine + H(+)</text>
        <dbReference type="Rhea" id="RHEA:42752"/>
        <dbReference type="Rhea" id="RHEA-COMP:10221"/>
        <dbReference type="Rhea" id="RHEA-COMP:10222"/>
        <dbReference type="ChEBI" id="CHEBI:15378"/>
        <dbReference type="ChEBI" id="CHEBI:57856"/>
        <dbReference type="ChEBI" id="CHEBI:59789"/>
        <dbReference type="ChEBI" id="CHEBI:65314"/>
        <dbReference type="ChEBI" id="CHEBI:74486"/>
        <dbReference type="EC" id="2.1.1.177"/>
    </reaction>
</comment>
<comment type="subunit">
    <text evidence="1">Homodimer.</text>
</comment>
<comment type="subcellular location">
    <subcellularLocation>
        <location evidence="1">Cytoplasm</location>
    </subcellularLocation>
</comment>
<comment type="similarity">
    <text evidence="1">Belongs to the RNA methyltransferase RlmH family.</text>
</comment>
<reference key="1">
    <citation type="journal article" date="2004" name="Proc. Natl. Acad. Sci. U.S.A.">
        <title>Complete genomes of two clinical Staphylococcus aureus strains: evidence for the rapid evolution of virulence and drug resistance.</title>
        <authorList>
            <person name="Holden M.T.G."/>
            <person name="Feil E.J."/>
            <person name="Lindsay J.A."/>
            <person name="Peacock S.J."/>
            <person name="Day N.P.J."/>
            <person name="Enright M.C."/>
            <person name="Foster T.J."/>
            <person name="Moore C.E."/>
            <person name="Hurst L."/>
            <person name="Atkin R."/>
            <person name="Barron A."/>
            <person name="Bason N."/>
            <person name="Bentley S.D."/>
            <person name="Chillingworth C."/>
            <person name="Chillingworth T."/>
            <person name="Churcher C."/>
            <person name="Clark L."/>
            <person name="Corton C."/>
            <person name="Cronin A."/>
            <person name="Doggett J."/>
            <person name="Dowd L."/>
            <person name="Feltwell T."/>
            <person name="Hance Z."/>
            <person name="Harris B."/>
            <person name="Hauser H."/>
            <person name="Holroyd S."/>
            <person name="Jagels K."/>
            <person name="James K.D."/>
            <person name="Lennard N."/>
            <person name="Line A."/>
            <person name="Mayes R."/>
            <person name="Moule S."/>
            <person name="Mungall K."/>
            <person name="Ormond D."/>
            <person name="Quail M.A."/>
            <person name="Rabbinowitsch E."/>
            <person name="Rutherford K.M."/>
            <person name="Sanders M."/>
            <person name="Sharp S."/>
            <person name="Simmonds M."/>
            <person name="Stevens K."/>
            <person name="Whitehead S."/>
            <person name="Barrell B.G."/>
            <person name="Spratt B.G."/>
            <person name="Parkhill J."/>
        </authorList>
    </citation>
    <scope>NUCLEOTIDE SEQUENCE [LARGE SCALE GENOMIC DNA]</scope>
    <source>
        <strain>MSSA476</strain>
    </source>
</reference>
<keyword id="KW-0963">Cytoplasm</keyword>
<keyword id="KW-0489">Methyltransferase</keyword>
<keyword id="KW-0698">rRNA processing</keyword>
<keyword id="KW-0949">S-adenosyl-L-methionine</keyword>
<keyword id="KW-0808">Transferase</keyword>
<sequence length="159" mass="18310">MKITILAVGKLKEKYWKQAIAEYEKRLGPYTKIDIIEVTDEKAPENMSDKEIEQVKEKEGQRILAKIKPQSTVITLEIQGKMLSSEGLAQELNQRMTQGQSDFVFVIGGSNGLHKDVLQRSNYALSFSKMTFPHQMMRVVLIEQVYRAFKIMRGEAYHK</sequence>
<accession>Q6GD66</accession>
<feature type="chain" id="PRO_0000198180" description="Ribosomal RNA large subunit methyltransferase H">
    <location>
        <begin position="1"/>
        <end position="159"/>
    </location>
</feature>
<feature type="binding site" evidence="1">
    <location>
        <position position="76"/>
    </location>
    <ligand>
        <name>S-adenosyl-L-methionine</name>
        <dbReference type="ChEBI" id="CHEBI:59789"/>
    </ligand>
</feature>
<feature type="binding site" evidence="1">
    <location>
        <position position="108"/>
    </location>
    <ligand>
        <name>S-adenosyl-L-methionine</name>
        <dbReference type="ChEBI" id="CHEBI:59789"/>
    </ligand>
</feature>
<feature type="binding site" evidence="1">
    <location>
        <begin position="127"/>
        <end position="132"/>
    </location>
    <ligand>
        <name>S-adenosyl-L-methionine</name>
        <dbReference type="ChEBI" id="CHEBI:59789"/>
    </ligand>
</feature>
<name>RLMH_STAAS</name>
<gene>
    <name evidence="1" type="primary">rlmH</name>
    <name type="ordered locus">SAS0024</name>
</gene>
<protein>
    <recommendedName>
        <fullName evidence="1">Ribosomal RNA large subunit methyltransferase H</fullName>
        <ecNumber evidence="1">2.1.1.177</ecNumber>
    </recommendedName>
    <alternativeName>
        <fullName evidence="1">23S rRNA (pseudouridine1915-N3)-methyltransferase</fullName>
    </alternativeName>
    <alternativeName>
        <fullName evidence="1">23S rRNA m3Psi1915 methyltransferase</fullName>
    </alternativeName>
    <alternativeName>
        <fullName evidence="1">rRNA (pseudouridine-N3-)-methyltransferase RlmH</fullName>
    </alternativeName>
</protein>
<proteinExistence type="inferred from homology"/>